<organism>
    <name type="scientific">Bos taurus</name>
    <name type="common">Bovine</name>
    <dbReference type="NCBI Taxonomy" id="9913"/>
    <lineage>
        <taxon>Eukaryota</taxon>
        <taxon>Metazoa</taxon>
        <taxon>Chordata</taxon>
        <taxon>Craniata</taxon>
        <taxon>Vertebrata</taxon>
        <taxon>Euteleostomi</taxon>
        <taxon>Mammalia</taxon>
        <taxon>Eutheria</taxon>
        <taxon>Laurasiatheria</taxon>
        <taxon>Artiodactyla</taxon>
        <taxon>Ruminantia</taxon>
        <taxon>Pecora</taxon>
        <taxon>Bovidae</taxon>
        <taxon>Bovinae</taxon>
        <taxon>Bos</taxon>
    </lineage>
</organism>
<comment type="subunit">
    <text evidence="1">Interacts with CHD7 and CHD8.</text>
</comment>
<comment type="subcellular location">
    <subcellularLocation>
        <location evidence="1">Nucleus</location>
    </subcellularLocation>
</comment>
<comment type="similarity">
    <text evidence="3">Belongs to the FAM124 family.</text>
</comment>
<keyword id="KW-0539">Nucleus</keyword>
<keyword id="KW-0597">Phosphoprotein</keyword>
<keyword id="KW-1185">Reference proteome</keyword>
<proteinExistence type="evidence at transcript level"/>
<accession>A6QLD5</accession>
<feature type="chain" id="PRO_0000350573" description="Protein FAM124B">
    <location>
        <begin position="1"/>
        <end position="461"/>
    </location>
</feature>
<feature type="region of interest" description="Disordered" evidence="2">
    <location>
        <begin position="302"/>
        <end position="346"/>
    </location>
</feature>
<feature type="compositionally biased region" description="Low complexity" evidence="2">
    <location>
        <begin position="323"/>
        <end position="334"/>
    </location>
</feature>
<feature type="modified residue" description="Phosphoserine" evidence="1">
    <location>
        <position position="49"/>
    </location>
</feature>
<sequence>MDEMPEPPAMTVHLLANAGQGLLLQQTLDQLLDCICPDIRLFLVSERASPVKYYDKCHSKRSRFPGMSVLLFLKENLGEERLFHVLDSLQHWPWQCYPTQNAQGRPCPYILANQEFYSLDSQMPIWGVRQVHCGTEILRVTLYCSFDNYEDAIRLYAMILQREATLQKSNFCFFVLYSTETFALQLSLKQLPLGTSVDPKEASVLQFKVQEIGQLVPLLPHPCVPISRTRWQTQDYDGNKILLQVQLNPGLGVRNGEPPFLNGTLGADTLPHGSRLTPVSAIRTLELRSRRIRGRRFKVSSVELPEPGGRPVSDGSSNTWWKSAGGSAQPSSPATESQPQLSSLHLEPGARMKVLGRENSFEKLEAETNVDTGFTMVSSEPRPSFASRFPRNLQTHQPPSCLSTSFSGSAASKNNRIFKERVHPLPLAGQRDLGAKKILSKCPLPLPVQGEAKEAEEEFFI</sequence>
<protein>
    <recommendedName>
        <fullName>Protein FAM124B</fullName>
    </recommendedName>
</protein>
<dbReference type="EMBL" id="BC147925">
    <property type="protein sequence ID" value="AAI47926.1"/>
    <property type="molecule type" value="mRNA"/>
</dbReference>
<dbReference type="RefSeq" id="NP_001095340.1">
    <property type="nucleotide sequence ID" value="NM_001101870.1"/>
</dbReference>
<dbReference type="SMR" id="A6QLD5"/>
<dbReference type="FunCoup" id="A6QLD5">
    <property type="interactions" value="16"/>
</dbReference>
<dbReference type="STRING" id="9913.ENSBTAP00000015633"/>
<dbReference type="PaxDb" id="9913-ENSBTAP00000015633"/>
<dbReference type="GeneID" id="506367"/>
<dbReference type="KEGG" id="bta:506367"/>
<dbReference type="CTD" id="79843"/>
<dbReference type="eggNOG" id="ENOG502QUJG">
    <property type="taxonomic scope" value="Eukaryota"/>
</dbReference>
<dbReference type="HOGENOM" id="CLU_037215_0_0_1"/>
<dbReference type="InParanoid" id="A6QLD5"/>
<dbReference type="OrthoDB" id="10023686at2759"/>
<dbReference type="TreeFam" id="TF328699"/>
<dbReference type="Proteomes" id="UP000009136">
    <property type="component" value="Unplaced"/>
</dbReference>
<dbReference type="GO" id="GO:0005654">
    <property type="term" value="C:nucleoplasm"/>
    <property type="evidence" value="ECO:0000318"/>
    <property type="project" value="GO_Central"/>
</dbReference>
<dbReference type="InterPro" id="IPR029380">
    <property type="entry name" value="FAM124"/>
</dbReference>
<dbReference type="InterPro" id="IPR046365">
    <property type="entry name" value="FAM124_dom"/>
</dbReference>
<dbReference type="PANTHER" id="PTHR14715">
    <property type="entry name" value="FAM124 DOMAIN-CONTAINING PROTEIN-RELATED"/>
    <property type="match status" value="1"/>
</dbReference>
<dbReference type="PANTHER" id="PTHR14715:SF2">
    <property type="entry name" value="PROTEIN FAM124B"/>
    <property type="match status" value="1"/>
</dbReference>
<dbReference type="Pfam" id="PF15067">
    <property type="entry name" value="FAM124"/>
    <property type="match status" value="1"/>
</dbReference>
<evidence type="ECO:0000250" key="1">
    <source>
        <dbReference type="UniProtKB" id="Q9H5Z6"/>
    </source>
</evidence>
<evidence type="ECO:0000256" key="2">
    <source>
        <dbReference type="SAM" id="MobiDB-lite"/>
    </source>
</evidence>
<evidence type="ECO:0000305" key="3"/>
<reference key="1">
    <citation type="submission" date="2007-06" db="EMBL/GenBank/DDBJ databases">
        <authorList>
            <consortium name="NIH - Mammalian Gene Collection (MGC) project"/>
        </authorList>
    </citation>
    <scope>NUCLEOTIDE SEQUENCE [LARGE SCALE MRNA]</scope>
    <source>
        <strain>Hereford</strain>
        <tissue>Fetal muscle</tissue>
    </source>
</reference>
<gene>
    <name type="primary">FAM124B</name>
</gene>
<name>F124B_BOVIN</name>